<evidence type="ECO:0000250" key="1">
    <source>
        <dbReference type="UniProtKB" id="Q8BVA5"/>
    </source>
</evidence>
<evidence type="ECO:0000250" key="2">
    <source>
        <dbReference type="UniProtKB" id="Q9H6V9"/>
    </source>
</evidence>
<evidence type="ECO:0000255" key="3">
    <source>
        <dbReference type="PROSITE-ProRule" id="PRU10037"/>
    </source>
</evidence>
<evidence type="ECO:0000305" key="4"/>
<gene>
    <name type="ORF">DDB_G0286581</name>
</gene>
<organism>
    <name type="scientific">Dictyostelium discoideum</name>
    <name type="common">Social amoeba</name>
    <dbReference type="NCBI Taxonomy" id="44689"/>
    <lineage>
        <taxon>Eukaryota</taxon>
        <taxon>Amoebozoa</taxon>
        <taxon>Evosea</taxon>
        <taxon>Eumycetozoa</taxon>
        <taxon>Dictyostelia</taxon>
        <taxon>Dictyosteliales</taxon>
        <taxon>Dictyosteliaceae</taxon>
        <taxon>Dictyostelium</taxon>
    </lineage>
</organism>
<sequence length="304" mass="35128">MELIEEIINLDEAIQGETRTEIIYTKSQTPSNIKIIVIAGNPGIESFYQEFVKVLNLSFNSKYDIYGVGHIGHCGKIENKTFSVEEQIKHKELFLEYLLKNKYGDKDRKDIKFILIGHSVGSYISLKVVSRFSEKFEFLSVVNLFPTFKNLYDGLSPFIKMVVMRESTRNGLSTFLHYIPSIVVSNVLKWILPSDESRIAVQSKINYYSALNILYMAYTETEDIKEIDDECHSVFNSRLNQLLFIYGQTDSYTPKSFYDEMKQLYPAGNIEYSSSYVPHAFVLHHSQEVALRVSEWLSLNILKN</sequence>
<dbReference type="EC" id="3.1.1.13" evidence="1"/>
<dbReference type="EMBL" id="AAFI02000089">
    <property type="protein sequence ID" value="EAL64046.1"/>
    <property type="molecule type" value="Genomic_DNA"/>
</dbReference>
<dbReference type="RefSeq" id="XP_637543.1">
    <property type="nucleotide sequence ID" value="XM_632451.1"/>
</dbReference>
<dbReference type="FunCoup" id="Q54LL8">
    <property type="interactions" value="26"/>
</dbReference>
<dbReference type="ESTHER" id="dicdi-u554">
    <property type="family name" value="LIDHydrolase"/>
</dbReference>
<dbReference type="PaxDb" id="44689-DDB0305142"/>
<dbReference type="EnsemblProtists" id="EAL64046">
    <property type="protein sequence ID" value="EAL64046"/>
    <property type="gene ID" value="DDB_G0286581"/>
</dbReference>
<dbReference type="GeneID" id="8625682"/>
<dbReference type="KEGG" id="ddi:DDB_G0286581"/>
<dbReference type="dictyBase" id="DDB_G0286581"/>
<dbReference type="VEuPathDB" id="AmoebaDB:DDB_G0286581"/>
<dbReference type="eggNOG" id="KOG3975">
    <property type="taxonomic scope" value="Eukaryota"/>
</dbReference>
<dbReference type="HOGENOM" id="CLU_018394_2_1_1"/>
<dbReference type="InParanoid" id="Q54LL8"/>
<dbReference type="OMA" id="WVPVSYY"/>
<dbReference type="PhylomeDB" id="Q54LL8"/>
<dbReference type="PRO" id="PR:Q54LL8"/>
<dbReference type="Proteomes" id="UP000002195">
    <property type="component" value="Chromosome 4"/>
</dbReference>
<dbReference type="GO" id="GO:0005811">
    <property type="term" value="C:lipid droplet"/>
    <property type="evidence" value="ECO:0000318"/>
    <property type="project" value="GO_Central"/>
</dbReference>
<dbReference type="GO" id="GO:0016298">
    <property type="term" value="F:lipase activity"/>
    <property type="evidence" value="ECO:0007669"/>
    <property type="project" value="InterPro"/>
</dbReference>
<dbReference type="GO" id="GO:0019915">
    <property type="term" value="P:lipid storage"/>
    <property type="evidence" value="ECO:0000318"/>
    <property type="project" value="GO_Central"/>
</dbReference>
<dbReference type="FunFam" id="3.40.50.1820:FF:000865">
    <property type="entry name" value="Lipid droplet-associated hydrolase"/>
    <property type="match status" value="1"/>
</dbReference>
<dbReference type="Gene3D" id="3.40.50.1820">
    <property type="entry name" value="alpha/beta hydrolase"/>
    <property type="match status" value="1"/>
</dbReference>
<dbReference type="InterPro" id="IPR029058">
    <property type="entry name" value="AB_hydrolase_fold"/>
</dbReference>
<dbReference type="InterPro" id="IPR019363">
    <property type="entry name" value="LDAH"/>
</dbReference>
<dbReference type="PANTHER" id="PTHR13390">
    <property type="entry name" value="LIPASE"/>
    <property type="match status" value="1"/>
</dbReference>
<dbReference type="PANTHER" id="PTHR13390:SF0">
    <property type="entry name" value="LIPID DROPLET-ASSOCIATED HYDROLASE"/>
    <property type="match status" value="1"/>
</dbReference>
<dbReference type="Pfam" id="PF10230">
    <property type="entry name" value="LIDHydrolase"/>
    <property type="match status" value="1"/>
</dbReference>
<dbReference type="SUPFAM" id="SSF53474">
    <property type="entry name" value="alpha/beta-Hydrolases"/>
    <property type="match status" value="1"/>
</dbReference>
<reference key="1">
    <citation type="journal article" date="2005" name="Nature">
        <title>The genome of the social amoeba Dictyostelium discoideum.</title>
        <authorList>
            <person name="Eichinger L."/>
            <person name="Pachebat J.A."/>
            <person name="Gloeckner G."/>
            <person name="Rajandream M.A."/>
            <person name="Sucgang R."/>
            <person name="Berriman M."/>
            <person name="Song J."/>
            <person name="Olsen R."/>
            <person name="Szafranski K."/>
            <person name="Xu Q."/>
            <person name="Tunggal B."/>
            <person name="Kummerfeld S."/>
            <person name="Madera M."/>
            <person name="Konfortov B.A."/>
            <person name="Rivero F."/>
            <person name="Bankier A.T."/>
            <person name="Lehmann R."/>
            <person name="Hamlin N."/>
            <person name="Davies R."/>
            <person name="Gaudet P."/>
            <person name="Fey P."/>
            <person name="Pilcher K."/>
            <person name="Chen G."/>
            <person name="Saunders D."/>
            <person name="Sodergren E.J."/>
            <person name="Davis P."/>
            <person name="Kerhornou A."/>
            <person name="Nie X."/>
            <person name="Hall N."/>
            <person name="Anjard C."/>
            <person name="Hemphill L."/>
            <person name="Bason N."/>
            <person name="Farbrother P."/>
            <person name="Desany B."/>
            <person name="Just E."/>
            <person name="Morio T."/>
            <person name="Rost R."/>
            <person name="Churcher C.M."/>
            <person name="Cooper J."/>
            <person name="Haydock S."/>
            <person name="van Driessche N."/>
            <person name="Cronin A."/>
            <person name="Goodhead I."/>
            <person name="Muzny D.M."/>
            <person name="Mourier T."/>
            <person name="Pain A."/>
            <person name="Lu M."/>
            <person name="Harper D."/>
            <person name="Lindsay R."/>
            <person name="Hauser H."/>
            <person name="James K.D."/>
            <person name="Quiles M."/>
            <person name="Madan Babu M."/>
            <person name="Saito T."/>
            <person name="Buchrieser C."/>
            <person name="Wardroper A."/>
            <person name="Felder M."/>
            <person name="Thangavelu M."/>
            <person name="Johnson D."/>
            <person name="Knights A."/>
            <person name="Loulseged H."/>
            <person name="Mungall K.L."/>
            <person name="Oliver K."/>
            <person name="Price C."/>
            <person name="Quail M.A."/>
            <person name="Urushihara H."/>
            <person name="Hernandez J."/>
            <person name="Rabbinowitsch E."/>
            <person name="Steffen D."/>
            <person name="Sanders M."/>
            <person name="Ma J."/>
            <person name="Kohara Y."/>
            <person name="Sharp S."/>
            <person name="Simmonds M.N."/>
            <person name="Spiegler S."/>
            <person name="Tivey A."/>
            <person name="Sugano S."/>
            <person name="White B."/>
            <person name="Walker D."/>
            <person name="Woodward J.R."/>
            <person name="Winckler T."/>
            <person name="Tanaka Y."/>
            <person name="Shaulsky G."/>
            <person name="Schleicher M."/>
            <person name="Weinstock G.M."/>
            <person name="Rosenthal A."/>
            <person name="Cox E.C."/>
            <person name="Chisholm R.L."/>
            <person name="Gibbs R.A."/>
            <person name="Loomis W.F."/>
            <person name="Platzer M."/>
            <person name="Kay R.R."/>
            <person name="Williams J.G."/>
            <person name="Dear P.H."/>
            <person name="Noegel A.A."/>
            <person name="Barrell B.G."/>
            <person name="Kuspa A."/>
        </authorList>
    </citation>
    <scope>NUCLEOTIDE SEQUENCE [LARGE SCALE GENOMIC DNA]</scope>
    <source>
        <strain>AX4</strain>
    </source>
</reference>
<comment type="function">
    <text evidence="1">Probable serine lipid hydrolase associated with lipid droplets. Has low cholesterol esterase activity. Appears to lack triglyceride lipase activity. Involved in cholesterol and triglyceride homeostasis; stimulates cellular triglyceride accumulation and cellular cholesterol release.</text>
</comment>
<comment type="catalytic activity">
    <reaction evidence="1">
        <text>a cholesterol ester + H2O = cholesterol + a fatty acid + H(+)</text>
        <dbReference type="Rhea" id="RHEA:36403"/>
        <dbReference type="ChEBI" id="CHEBI:15377"/>
        <dbReference type="ChEBI" id="CHEBI:15378"/>
        <dbReference type="ChEBI" id="CHEBI:16113"/>
        <dbReference type="ChEBI" id="CHEBI:17002"/>
        <dbReference type="ChEBI" id="CHEBI:28868"/>
        <dbReference type="EC" id="3.1.1.13"/>
    </reaction>
    <physiologicalReaction direction="left-to-right" evidence="1">
        <dbReference type="Rhea" id="RHEA:36404"/>
    </physiologicalReaction>
</comment>
<comment type="subcellular location">
    <subcellularLocation>
        <location evidence="1">Lipid droplet</location>
    </subcellularLocation>
</comment>
<comment type="similarity">
    <text evidence="4">Belongs to the AB hydrolase superfamily. LDAH family.</text>
</comment>
<comment type="caution">
    <text evidence="1">The catalytic activity is unsure despite catalytic sites being conserved (By similarity). May have low cholesterol esterase activity but lack triglyceride lipase activity (By similarity).</text>
</comment>
<feature type="chain" id="PRO_0000327947" description="Lipid droplet-associated hydrolase">
    <location>
        <begin position="1"/>
        <end position="304"/>
    </location>
</feature>
<feature type="active site" description="Nucleophile" evidence="3">
    <location>
        <position position="119"/>
    </location>
</feature>
<feature type="active site" description="Charge relay system" evidence="2">
    <location>
        <position position="250"/>
    </location>
</feature>
<feature type="active site" description="Charge relay system" evidence="2">
    <location>
        <position position="279"/>
    </location>
</feature>
<proteinExistence type="inferred from homology"/>
<protein>
    <recommendedName>
        <fullName evidence="1">Lipid droplet-associated hydrolase</fullName>
        <ecNumber evidence="1">3.1.1.13</ecNumber>
    </recommendedName>
    <alternativeName>
        <fullName evidence="1">Lipid droplet-associated serine hydrolase</fullName>
    </alternativeName>
</protein>
<keyword id="KW-0378">Hydrolase</keyword>
<keyword id="KW-0551">Lipid droplet</keyword>
<keyword id="KW-1185">Reference proteome</keyword>
<name>LDAH_DICDI</name>
<accession>Q54LL8</accession>